<feature type="signal peptide" evidence="2">
    <location>
        <begin position="1"/>
        <end status="unknown"/>
    </location>
</feature>
<feature type="chain" id="PRO_0000411942" description="Pheromone-processing carboxypeptidase KEX1">
    <location>
        <begin status="unknown"/>
        <end position="656"/>
    </location>
</feature>
<feature type="topological domain" description="Lumenal" evidence="2">
    <location>
        <begin status="unknown"/>
        <end position="559"/>
    </location>
</feature>
<feature type="transmembrane region" description="Helical" evidence="2">
    <location>
        <begin position="560"/>
        <end position="580"/>
    </location>
</feature>
<feature type="topological domain" description="Cytoplasmic" evidence="2">
    <location>
        <begin position="581"/>
        <end position="656"/>
    </location>
</feature>
<feature type="region of interest" description="Disordered" evidence="4">
    <location>
        <begin position="1"/>
        <end position="79"/>
    </location>
</feature>
<feature type="region of interest" description="Disordered" evidence="4">
    <location>
        <begin position="608"/>
        <end position="656"/>
    </location>
</feature>
<feature type="compositionally biased region" description="Polar residues" evidence="4">
    <location>
        <begin position="1"/>
        <end position="11"/>
    </location>
</feature>
<feature type="compositionally biased region" description="Low complexity" evidence="4">
    <location>
        <begin position="34"/>
        <end position="60"/>
    </location>
</feature>
<feature type="compositionally biased region" description="Polar residues" evidence="4">
    <location>
        <begin position="644"/>
        <end position="656"/>
    </location>
</feature>
<feature type="active site" evidence="3">
    <location>
        <position position="228"/>
    </location>
</feature>
<feature type="active site" evidence="3">
    <location>
        <position position="423"/>
    </location>
</feature>
<feature type="active site" evidence="3">
    <location>
        <position position="481"/>
    </location>
</feature>
<feature type="glycosylation site" description="N-linked (GlcNAc...) asparagine" evidence="2">
    <location>
        <position position="58"/>
    </location>
</feature>
<feature type="glycosylation site" description="N-linked (GlcNAc...) asparagine" evidence="2">
    <location>
        <position position="304"/>
    </location>
</feature>
<feature type="glycosylation site" description="N-linked (GlcNAc...) asparagine" evidence="2">
    <location>
        <position position="458"/>
    </location>
</feature>
<feature type="glycosylation site" description="N-linked (GlcNAc...) asparagine" evidence="2">
    <location>
        <position position="470"/>
    </location>
</feature>
<feature type="glycosylation site" description="N-linked (GlcNAc...) asparagine" evidence="2">
    <location>
        <position position="478"/>
    </location>
</feature>
<feature type="glycosylation site" description="N-linked (GlcNAc...) asparagine" evidence="2">
    <location>
        <position position="531"/>
    </location>
</feature>
<feature type="glycosylation site" description="N-linked (GlcNAc...) asparagine" evidence="2">
    <location>
        <position position="559"/>
    </location>
</feature>
<name>KEX1_PUCGT</name>
<proteinExistence type="inferred from homology"/>
<dbReference type="EC" id="3.4.16.6"/>
<dbReference type="EMBL" id="DS178373">
    <property type="protein sequence ID" value="EFP92780.2"/>
    <property type="molecule type" value="Genomic_DNA"/>
</dbReference>
<dbReference type="RefSeq" id="XP_003337199.2">
    <property type="nucleotide sequence ID" value="XM_003337151.2"/>
</dbReference>
<dbReference type="SMR" id="E3L8A5"/>
<dbReference type="FunCoup" id="E3L8A5">
    <property type="interactions" value="236"/>
</dbReference>
<dbReference type="STRING" id="418459.E3L8A5"/>
<dbReference type="ESTHER" id="pucgt-kex1">
    <property type="family name" value="Carboxypeptidase_S10"/>
</dbReference>
<dbReference type="MEROPS" id="S10.007"/>
<dbReference type="GlyCosmos" id="E3L8A5">
    <property type="glycosylation" value="7 sites, No reported glycans"/>
</dbReference>
<dbReference type="EnsemblFungi" id="EFP92780">
    <property type="protein sequence ID" value="EFP92780"/>
    <property type="gene ID" value="PGTG_18559"/>
</dbReference>
<dbReference type="GeneID" id="10542492"/>
<dbReference type="KEGG" id="pgr:PGTG_18559"/>
<dbReference type="VEuPathDB" id="FungiDB:PGTG_18559"/>
<dbReference type="eggNOG" id="KOG1282">
    <property type="taxonomic scope" value="Eukaryota"/>
</dbReference>
<dbReference type="HOGENOM" id="CLU_346513_0_0_1"/>
<dbReference type="InParanoid" id="E3L8A5"/>
<dbReference type="OrthoDB" id="443318at2759"/>
<dbReference type="Proteomes" id="UP000008783">
    <property type="component" value="Unassembled WGS sequence"/>
</dbReference>
<dbReference type="GO" id="GO:0016020">
    <property type="term" value="C:membrane"/>
    <property type="evidence" value="ECO:0007669"/>
    <property type="project" value="UniProtKB-KW"/>
</dbReference>
<dbReference type="GO" id="GO:0005802">
    <property type="term" value="C:trans-Golgi network"/>
    <property type="evidence" value="ECO:0000318"/>
    <property type="project" value="GO_Central"/>
</dbReference>
<dbReference type="GO" id="GO:0004185">
    <property type="term" value="F:serine-type carboxypeptidase activity"/>
    <property type="evidence" value="ECO:0000318"/>
    <property type="project" value="GO_Central"/>
</dbReference>
<dbReference type="GO" id="GO:0006915">
    <property type="term" value="P:apoptotic process"/>
    <property type="evidence" value="ECO:0007669"/>
    <property type="project" value="UniProtKB-KW"/>
</dbReference>
<dbReference type="GO" id="GO:0006508">
    <property type="term" value="P:proteolysis"/>
    <property type="evidence" value="ECO:0007669"/>
    <property type="project" value="UniProtKB-KW"/>
</dbReference>
<dbReference type="FunFam" id="3.40.50.1820:FF:000121">
    <property type="entry name" value="Carboxypeptidase D"/>
    <property type="match status" value="1"/>
</dbReference>
<dbReference type="Gene3D" id="3.40.50.1820">
    <property type="entry name" value="alpha/beta hydrolase"/>
    <property type="match status" value="1"/>
</dbReference>
<dbReference type="InterPro" id="IPR029058">
    <property type="entry name" value="AB_hydrolase_fold"/>
</dbReference>
<dbReference type="InterPro" id="IPR001563">
    <property type="entry name" value="Peptidase_S10"/>
</dbReference>
<dbReference type="InterPro" id="IPR033124">
    <property type="entry name" value="Ser_caboxypep_his_AS"/>
</dbReference>
<dbReference type="PANTHER" id="PTHR11802:SF190">
    <property type="entry name" value="PHEROMONE-PROCESSING CARBOXYPEPTIDASE KEX1"/>
    <property type="match status" value="1"/>
</dbReference>
<dbReference type="PANTHER" id="PTHR11802">
    <property type="entry name" value="SERINE PROTEASE FAMILY S10 SERINE CARBOXYPEPTIDASE"/>
    <property type="match status" value="1"/>
</dbReference>
<dbReference type="Pfam" id="PF00450">
    <property type="entry name" value="Peptidase_S10"/>
    <property type="match status" value="1"/>
</dbReference>
<dbReference type="PRINTS" id="PR00724">
    <property type="entry name" value="CRBOXYPTASEC"/>
</dbReference>
<dbReference type="SUPFAM" id="SSF53474">
    <property type="entry name" value="alpha/beta-Hydrolases"/>
    <property type="match status" value="1"/>
</dbReference>
<dbReference type="PROSITE" id="PS00560">
    <property type="entry name" value="CARBOXYPEPT_SER_HIS"/>
    <property type="match status" value="1"/>
</dbReference>
<comment type="function">
    <text evidence="1">Protease with a carboxypeptidase B-like function involved in the C-terminal processing of the lysine and arginine residues from protein precursors. Promotes cell fusion and is involved in the programmed cell death (By similarity).</text>
</comment>
<comment type="catalytic activity">
    <reaction>
        <text>Preferential release of a C-terminal arginine or lysine residue.</text>
        <dbReference type="EC" id="3.4.16.6"/>
    </reaction>
</comment>
<comment type="subcellular location">
    <subcellularLocation>
        <location evidence="1">Golgi apparatus</location>
        <location evidence="1">trans-Golgi network membrane</location>
        <topology evidence="1">Single-pass type I membrane protein</topology>
    </subcellularLocation>
</comment>
<comment type="similarity">
    <text evidence="5">Belongs to the peptidase S10 family.</text>
</comment>
<accession>E3L8A5</accession>
<organism>
    <name type="scientific">Puccinia graminis f. sp. tritici (strain CRL 75-36-700-3 / race SCCL)</name>
    <name type="common">Black stem rust fungus</name>
    <dbReference type="NCBI Taxonomy" id="418459"/>
    <lineage>
        <taxon>Eukaryota</taxon>
        <taxon>Fungi</taxon>
        <taxon>Dikarya</taxon>
        <taxon>Basidiomycota</taxon>
        <taxon>Pucciniomycotina</taxon>
        <taxon>Pucciniomycetes</taxon>
        <taxon>Pucciniales</taxon>
        <taxon>Pucciniaceae</taxon>
        <taxon>Puccinia</taxon>
    </lineage>
</organism>
<gene>
    <name type="primary">KEX1</name>
    <name type="ORF">PGTG_18559</name>
</gene>
<protein>
    <recommendedName>
        <fullName>Pheromone-processing carboxypeptidase KEX1</fullName>
        <ecNumber>3.4.16.6</ecNumber>
    </recommendedName>
    <alternativeName>
        <fullName>Carboxypeptidase D</fullName>
    </alternativeName>
</protein>
<evidence type="ECO:0000250" key="1"/>
<evidence type="ECO:0000255" key="2"/>
<evidence type="ECO:0000255" key="3">
    <source>
        <dbReference type="PROSITE-ProRule" id="PRU10075"/>
    </source>
</evidence>
<evidence type="ECO:0000256" key="4">
    <source>
        <dbReference type="SAM" id="MobiDB-lite"/>
    </source>
</evidence>
<evidence type="ECO:0000305" key="5"/>
<sequence length="656" mass="72697">MSSFQSATTRQGLHRRNMNSETPQSEFIQRLRRSPPSESSSSTPSSSTTTSSTTTTSNTSGKKKKTAPSASDFYVPSLPGQPKDSQLILYAGHLSFSPPDTTIEPEKDSYGFFFLNKARHIANRPVLLVWLNGGPGCSSFDGSLMEVGPLRMVLKGDGTLKEVDAAWNEYANMLFIDQPTGTGYSYGPKPNYVHELDVSSANLVNLLARFFKIFPEYQQMDLYICGESFAGQYIPYLAQAILDTNIISAPLKGIMIGNGWIDPINQYLAYPEFAFKVGLVNPSSKAADLVNEELKKCTEWIDSNSTTPIHIEACEGILSAITDSTVQTVNSQKMCLNMYDVRLVDSYPACGLTWPPDLADITPYLSRTDVKQALHAQDHAADWVECEAKVGNNFWAKTSQPSVTLFPKLLDKIKILLFSGDQDLICCHTGTERMIDHLTWAGHQGWTSQAINQPWKVNGSYAGLWKEERNLTYVLVANASHMAPYDVPYVTQDMLVRFLGIDVMTAAGPAAQITSRIGEETATKVNRVVMNETKLGQEGSGTTGLAMTSGPVHDENYYNASSAMLFLTLVGLVVGLIFFVRRRLRRDGHGDFAHHPSDETEIILKNHHHHHLSPDSSLPRSARDRQFQPVPTDDLDDHHLHPNLPSNNTSYQDLPR</sequence>
<reference key="1">
    <citation type="journal article" date="2011" name="Proc. Natl. Acad. Sci. U.S.A.">
        <title>Obligate biotrophy features unraveled by the genomic analysis of rust fungi.</title>
        <authorList>
            <person name="Duplessis S."/>
            <person name="Cuomo C.A."/>
            <person name="Lin Y.-C."/>
            <person name="Aerts A."/>
            <person name="Tisserant E."/>
            <person name="Veneault-Fourrey C."/>
            <person name="Joly D.L."/>
            <person name="Hacquard S."/>
            <person name="Amselem J."/>
            <person name="Cantarel B.L."/>
            <person name="Chiu R."/>
            <person name="Coutinho P.M."/>
            <person name="Feau N."/>
            <person name="Field M."/>
            <person name="Frey P."/>
            <person name="Gelhaye E."/>
            <person name="Goldberg J."/>
            <person name="Grabherr M.G."/>
            <person name="Kodira C.D."/>
            <person name="Kohler A."/>
            <person name="Kuees U."/>
            <person name="Lindquist E.A."/>
            <person name="Lucas S.M."/>
            <person name="Mago R."/>
            <person name="Mauceli E."/>
            <person name="Morin E."/>
            <person name="Murat C."/>
            <person name="Pangilinan J.L."/>
            <person name="Park R."/>
            <person name="Pearson M."/>
            <person name="Quesneville H."/>
            <person name="Rouhier N."/>
            <person name="Sakthikumar S."/>
            <person name="Salamov A.A."/>
            <person name="Schmutz J."/>
            <person name="Selles B."/>
            <person name="Shapiro H."/>
            <person name="Tanguay P."/>
            <person name="Tuskan G.A."/>
            <person name="Henrissat B."/>
            <person name="Van de Peer Y."/>
            <person name="Rouze P."/>
            <person name="Ellis J.G."/>
            <person name="Dodds P.N."/>
            <person name="Schein J.E."/>
            <person name="Zhong S."/>
            <person name="Hamelin R.C."/>
            <person name="Grigoriev I.V."/>
            <person name="Szabo L.J."/>
            <person name="Martin F."/>
        </authorList>
    </citation>
    <scope>NUCLEOTIDE SEQUENCE [LARGE SCALE GENOMIC DNA]</scope>
    <source>
        <strain>CRL 75-36-700-3 / race SCCL</strain>
    </source>
</reference>
<reference key="2">
    <citation type="journal article" date="2017" name="G3 (Bethesda)">
        <title>Comparative analysis highlights variable genome content of wheat rusts and divergence of the mating loci.</title>
        <authorList>
            <person name="Cuomo C.A."/>
            <person name="Bakkeren G."/>
            <person name="Khalil H.B."/>
            <person name="Panwar V."/>
            <person name="Joly D."/>
            <person name="Linning R."/>
            <person name="Sakthikumar S."/>
            <person name="Song X."/>
            <person name="Adiconis X."/>
            <person name="Fan L."/>
            <person name="Goldberg J.M."/>
            <person name="Levin J.Z."/>
            <person name="Young S."/>
            <person name="Zeng Q."/>
            <person name="Anikster Y."/>
            <person name="Bruce M."/>
            <person name="Wang M."/>
            <person name="Yin C."/>
            <person name="McCallum B."/>
            <person name="Szabo L.J."/>
            <person name="Hulbert S."/>
            <person name="Chen X."/>
            <person name="Fellers J.P."/>
        </authorList>
    </citation>
    <scope>GENOME REANNOTATION</scope>
    <source>
        <strain>CRL 75-36-700-3 / race SCCL</strain>
    </source>
</reference>
<keyword id="KW-0053">Apoptosis</keyword>
<keyword id="KW-0121">Carboxypeptidase</keyword>
<keyword id="KW-0325">Glycoprotein</keyword>
<keyword id="KW-0333">Golgi apparatus</keyword>
<keyword id="KW-0378">Hydrolase</keyword>
<keyword id="KW-0472">Membrane</keyword>
<keyword id="KW-0645">Protease</keyword>
<keyword id="KW-1185">Reference proteome</keyword>
<keyword id="KW-0732">Signal</keyword>
<keyword id="KW-0812">Transmembrane</keyword>
<keyword id="KW-1133">Transmembrane helix</keyword>